<evidence type="ECO:0000250" key="1"/>
<evidence type="ECO:0000255" key="2"/>
<evidence type="ECO:0000269" key="3">
    <source>
    </source>
</evidence>
<evidence type="ECO:0000269" key="4">
    <source>
    </source>
</evidence>
<evidence type="ECO:0000269" key="5">
    <source>
    </source>
</evidence>
<evidence type="ECO:0000305" key="6"/>
<gene>
    <name type="primary">CYP71D15</name>
</gene>
<name>C71DF_MENPI</name>
<keyword id="KW-0256">Endoplasmic reticulum</keyword>
<keyword id="KW-0349">Heme</keyword>
<keyword id="KW-0408">Iron</keyword>
<keyword id="KW-0472">Membrane</keyword>
<keyword id="KW-0479">Metal-binding</keyword>
<keyword id="KW-0503">Monooxygenase</keyword>
<keyword id="KW-0560">Oxidoreductase</keyword>
<keyword id="KW-0735">Signal-anchor</keyword>
<keyword id="KW-0812">Transmembrane</keyword>
<keyword id="KW-1133">Transmembrane helix</keyword>
<comment type="function">
    <text evidence="3 5">Hydroxylates (-)-(4S)-limonene to (-)-trans-isopiperitenol, a precursor of (-)-menthol, responsible for the cooling sensation of peppermint. Fluorinated substrate analogs are hydroxylated with the same regio- and stereochemistry.</text>
</comment>
<comment type="catalytic activity">
    <reaction evidence="3 5">
        <text>(4S)-limonene + reduced [NADPH--hemoprotein reductase] + O2 = (1S,6R)-isopiperitenol + oxidized [NADPH--hemoprotein reductase] + H2O + H(+)</text>
        <dbReference type="Rhea" id="RHEA:15129"/>
        <dbReference type="Rhea" id="RHEA-COMP:11964"/>
        <dbReference type="Rhea" id="RHEA-COMP:11965"/>
        <dbReference type="ChEBI" id="CHEBI:15377"/>
        <dbReference type="ChEBI" id="CHEBI:15378"/>
        <dbReference type="ChEBI" id="CHEBI:15379"/>
        <dbReference type="ChEBI" id="CHEBI:15383"/>
        <dbReference type="ChEBI" id="CHEBI:15406"/>
        <dbReference type="ChEBI" id="CHEBI:57618"/>
        <dbReference type="ChEBI" id="CHEBI:58210"/>
        <dbReference type="EC" id="1.14.14.99"/>
    </reaction>
</comment>
<comment type="cofactor">
    <cofactor evidence="1">
        <name>heme</name>
        <dbReference type="ChEBI" id="CHEBI:30413"/>
    </cofactor>
</comment>
<comment type="subcellular location">
    <subcellularLocation>
        <location evidence="6">Endoplasmic reticulum membrane</location>
        <topology evidence="6">Single-pass type II membrane protein</topology>
    </subcellularLocation>
</comment>
<comment type="similarity">
    <text evidence="6">Belongs to the cytochrome P450 family.</text>
</comment>
<comment type="online information" name="Protein Spotlight">
    <link uri="https://www.proteinspotlight.org/back_issues/113"/>
    <text>Mint condition - Issue 113 of January 2010</text>
</comment>
<proteinExistence type="evidence at protein level"/>
<organism>
    <name type="scientific">Mentha piperita</name>
    <name type="common">Peppermint</name>
    <name type="synonym">Mentha aquatica x Mentha spicata</name>
    <dbReference type="NCBI Taxonomy" id="34256"/>
    <lineage>
        <taxon>Eukaryota</taxon>
        <taxon>Viridiplantae</taxon>
        <taxon>Streptophyta</taxon>
        <taxon>Embryophyta</taxon>
        <taxon>Tracheophyta</taxon>
        <taxon>Spermatophyta</taxon>
        <taxon>Magnoliopsida</taxon>
        <taxon>eudicotyledons</taxon>
        <taxon>Gunneridae</taxon>
        <taxon>Pentapetalae</taxon>
        <taxon>asterids</taxon>
        <taxon>lamiids</taxon>
        <taxon>Lamiales</taxon>
        <taxon>Lamiaceae</taxon>
        <taxon>Nepetoideae</taxon>
        <taxon>Mentheae</taxon>
        <taxon>Menthinae</taxon>
        <taxon>Mentha</taxon>
    </lineage>
</organism>
<feature type="chain" id="PRO_0000389499" description="Cytochrome P450 71D15">
    <location>
        <begin position="1"/>
        <end position="498"/>
    </location>
</feature>
<feature type="transmembrane region" description="Helical; Signal-anchor for type II membrane protein" evidence="2">
    <location>
        <begin position="3"/>
        <end position="23"/>
    </location>
</feature>
<feature type="binding site" description="axial binding residue" evidence="1">
    <location>
        <position position="437"/>
    </location>
    <ligand>
        <name>heme</name>
        <dbReference type="ChEBI" id="CHEBI:30413"/>
    </ligand>
    <ligandPart>
        <name>Fe</name>
        <dbReference type="ChEBI" id="CHEBI:18248"/>
    </ligandPart>
</feature>
<feature type="mutagenesis site" description="No effect on activity or regiospecificity." evidence="4">
    <original>M</original>
    <variation>L</variation>
    <location>
        <position position="358"/>
    </location>
</feature>
<feature type="mutagenesis site" description="Strong decrease of activity." evidence="4">
    <original>M</original>
    <variation>L</variation>
    <location>
        <position position="360"/>
    </location>
</feature>
<feature type="mutagenesis site" description="Loss of activity." evidence="4">
    <original>I</original>
    <variation>F</variation>
    <location>
        <position position="364"/>
    </location>
</feature>
<feature type="mutagenesis site" description="No effect on activity or regiospecificity." evidence="4">
    <original>S</original>
    <variation>Q</variation>
    <location>
        <position position="370"/>
    </location>
</feature>
<feature type="mutagenesis site" description="No effect on activity or regiospecificity." evidence="4">
    <original>C</original>
    <variation>S</variation>
    <location>
        <position position="371"/>
    </location>
</feature>
<accession>Q9XHE6</accession>
<reference key="1">
    <citation type="journal article" date="1999" name="Arch. Biochem. Biophys.">
        <title>Regiospecific cytochrome P450 limonene hydroxylases from mint (Mentha) species: cDNA isolation, characterization, and functional expression of (-)-4S-limonene-3-hydroxylase and (-)-4S-limonene-6-hydroxylase.</title>
        <authorList>
            <person name="Lupien S."/>
            <person name="Karp F."/>
            <person name="Wildung M."/>
            <person name="Croteau R."/>
        </authorList>
    </citation>
    <scope>NUCLEOTIDE SEQUENCE [MRNA]</scope>
    <scope>FUNCTION</scope>
    <scope>CATALYTIC ACTIVITY</scope>
    <source>
        <strain>cv. Black Mitcham</strain>
    </source>
</reference>
<reference key="2">
    <citation type="submission" date="2007-08" db="EMBL/GenBank/DDBJ databases">
        <title>Isolation of full-length genes of menthol biosynthesis pathway from Mentha x piperita cv. Madhuras.</title>
        <authorList>
            <person name="Gupta M.K."/>
            <person name="Gupta S."/>
            <person name="Shasany A.K."/>
            <person name="Khanuja S.P.S."/>
        </authorList>
    </citation>
    <scope>NUCLEOTIDE SEQUENCE [MRNA]</scope>
    <source>
        <strain>cv. Madhuras</strain>
    </source>
</reference>
<reference key="3">
    <citation type="journal article" date="2000" name="Proc. Natl. Acad. Sci. U.S.A.">
        <title>A single amino acid substitution (F363I) converts the regiochemistry of the spearmint (-)-limonene hydroxylase from a C6- to a C3-hydroxylase.</title>
        <authorList>
            <person name="Schalk M."/>
            <person name="Croteau R."/>
        </authorList>
    </citation>
    <scope>MUTAGENESIS OF MET-358; MET-360; ILE-364; SER-370 AND CYS-371</scope>
</reference>
<reference key="4">
    <citation type="journal article" date="2001" name="Arch. Biochem. Biophys.">
        <title>Hydroxylation of limonene enantiomers and analogs by recombinant (-)-limonene 3- and 6-hydroxylases from mint (Mentha) species: evidence for catalysis within sterically constrained active sites.</title>
        <authorList>
            <person name="Wuest M."/>
            <person name="Little D.B."/>
            <person name="Schalk M."/>
            <person name="Croteau R."/>
        </authorList>
    </citation>
    <scope>FUNCTION</scope>
    <scope>CATALYTIC ACTIVITY</scope>
</reference>
<sequence>MELLQLWSALIILVVTYTISLLINQWRKPKPQGKFPPGPPKLPLIGHLHLLWGKLPQHALASVAKEYGPVAHVQLGEVFSVVLSSREATKEAMKLVDPACANRFESIGTRIMWYDNEDIIFSPYSEHWRQMRKICVSELLSSRNVRSFGFIRQDEVSRLLRHLRSSAGAAVDMTERIETLTCSIICRAAFGSVIRDNAELVGLVKDALSMASGFELADMFPSSKLLNLLCWNKSKLWRMRRRVDTILEAIVDEHKFKKSGEFGGEDIIDVLFRMQKDTQIKVPITTNSIKAFIFDTFSAGTETSSTTTLWVLAELMRNPAVMAKAQAEVRAALKEKTNWDVDDVQELKYMKSVVKETMRMHPPIPLIPRSCREECVVNGYTIPNKARIMINVWSMGRNPLYWEKPDTFWPERFDQVSKDFMGNDFEFVPFGAGRRICPGLNFGLANVEVPLAQLLYHFDWKLAEGMKPSDMDMSEAEGLTGILKNNLLLVPTPYDPSS</sequence>
<protein>
    <recommendedName>
        <fullName>Cytochrome P450 71D15</fullName>
        <ecNumber evidence="3 5">1.14.14.99</ecNumber>
    </recommendedName>
    <alternativeName>
        <fullName>(-)-(4S)-Limonene-3-hydroxylase</fullName>
    </alternativeName>
    <alternativeName>
        <fullName>Cytochrome P450 isoform PM2</fullName>
    </alternativeName>
</protein>
<dbReference type="EC" id="1.14.14.99" evidence="3 5"/>
<dbReference type="EMBL" id="AF124817">
    <property type="protein sequence ID" value="AAD44152.1"/>
    <property type="molecule type" value="mRNA"/>
</dbReference>
<dbReference type="EMBL" id="EU108698">
    <property type="protein sequence ID" value="ABW86882.1"/>
    <property type="molecule type" value="mRNA"/>
</dbReference>
<dbReference type="SMR" id="Q9XHE6"/>
<dbReference type="KEGG" id="ag:AAD44152"/>
<dbReference type="BioCyc" id="MetaCyc:MONOMER-6761"/>
<dbReference type="GO" id="GO:0005789">
    <property type="term" value="C:endoplasmic reticulum membrane"/>
    <property type="evidence" value="ECO:0007669"/>
    <property type="project" value="UniProtKB-SubCell"/>
</dbReference>
<dbReference type="GO" id="GO:0018674">
    <property type="term" value="F:(S)-limonene 3-monooxygenase activity"/>
    <property type="evidence" value="ECO:0000314"/>
    <property type="project" value="UniProtKB"/>
</dbReference>
<dbReference type="GO" id="GO:0020037">
    <property type="term" value="F:heme binding"/>
    <property type="evidence" value="ECO:0007669"/>
    <property type="project" value="InterPro"/>
</dbReference>
<dbReference type="GO" id="GO:0005506">
    <property type="term" value="F:iron ion binding"/>
    <property type="evidence" value="ECO:0007669"/>
    <property type="project" value="InterPro"/>
</dbReference>
<dbReference type="CDD" id="cd11072">
    <property type="entry name" value="CYP71-like"/>
    <property type="match status" value="1"/>
</dbReference>
<dbReference type="FunFam" id="1.10.630.10:FF:000043">
    <property type="entry name" value="Cytochrome P450 99A2"/>
    <property type="match status" value="1"/>
</dbReference>
<dbReference type="Gene3D" id="1.10.630.10">
    <property type="entry name" value="Cytochrome P450"/>
    <property type="match status" value="1"/>
</dbReference>
<dbReference type="InterPro" id="IPR052306">
    <property type="entry name" value="CYP450_71D"/>
</dbReference>
<dbReference type="InterPro" id="IPR001128">
    <property type="entry name" value="Cyt_P450"/>
</dbReference>
<dbReference type="InterPro" id="IPR017972">
    <property type="entry name" value="Cyt_P450_CS"/>
</dbReference>
<dbReference type="InterPro" id="IPR002401">
    <property type="entry name" value="Cyt_P450_E_grp-I"/>
</dbReference>
<dbReference type="InterPro" id="IPR036396">
    <property type="entry name" value="Cyt_P450_sf"/>
</dbReference>
<dbReference type="PANTHER" id="PTHR47953:SF16">
    <property type="entry name" value="CYTOCHROME P450 71D8"/>
    <property type="match status" value="1"/>
</dbReference>
<dbReference type="PANTHER" id="PTHR47953">
    <property type="entry name" value="OS08G0105600 PROTEIN"/>
    <property type="match status" value="1"/>
</dbReference>
<dbReference type="Pfam" id="PF00067">
    <property type="entry name" value="p450"/>
    <property type="match status" value="1"/>
</dbReference>
<dbReference type="PRINTS" id="PR00463">
    <property type="entry name" value="EP450I"/>
</dbReference>
<dbReference type="PRINTS" id="PR00385">
    <property type="entry name" value="P450"/>
</dbReference>
<dbReference type="SUPFAM" id="SSF48264">
    <property type="entry name" value="Cytochrome P450"/>
    <property type="match status" value="1"/>
</dbReference>
<dbReference type="PROSITE" id="PS00086">
    <property type="entry name" value="CYTOCHROME_P450"/>
    <property type="match status" value="1"/>
</dbReference>